<evidence type="ECO:0000250" key="1"/>
<evidence type="ECO:0000250" key="2">
    <source>
        <dbReference type="UniProtKB" id="P37231"/>
    </source>
</evidence>
<evidence type="ECO:0000250" key="3">
    <source>
        <dbReference type="UniProtKB" id="P37238"/>
    </source>
</evidence>
<evidence type="ECO:0000255" key="4">
    <source>
        <dbReference type="PROSITE-ProRule" id="PRU00407"/>
    </source>
</evidence>
<evidence type="ECO:0000255" key="5">
    <source>
        <dbReference type="PROSITE-ProRule" id="PRU01189"/>
    </source>
</evidence>
<evidence type="ECO:0000256" key="6">
    <source>
        <dbReference type="SAM" id="MobiDB-lite"/>
    </source>
</evidence>
<evidence type="ECO:0000305" key="7"/>
<name>PPARG_CANLF</name>
<keyword id="KW-0010">Activator</keyword>
<keyword id="KW-0090">Biological rhythms</keyword>
<keyword id="KW-0963">Cytoplasm</keyword>
<keyword id="KW-0238">DNA-binding</keyword>
<keyword id="KW-1017">Isopeptide bond</keyword>
<keyword id="KW-0479">Metal-binding</keyword>
<keyword id="KW-0539">Nucleus</keyword>
<keyword id="KW-0597">Phosphoprotein</keyword>
<keyword id="KW-0675">Receptor</keyword>
<keyword id="KW-1185">Reference proteome</keyword>
<keyword id="KW-0804">Transcription</keyword>
<keyword id="KW-0805">Transcription regulation</keyword>
<keyword id="KW-0832">Ubl conjugation</keyword>
<keyword id="KW-0862">Zinc</keyword>
<keyword id="KW-0863">Zinc-finger</keyword>
<accession>Q4U3Q4</accession>
<reference key="1">
    <citation type="submission" date="2005-04" db="EMBL/GenBank/DDBJ databases">
        <authorList>
            <person name="Nishii N."/>
            <person name="Takasu M."/>
            <person name="Maeda S."/>
            <person name="Ohba Y."/>
            <person name="Kitagawa H."/>
        </authorList>
    </citation>
    <scope>NUCLEOTIDE SEQUENCE [MRNA]</scope>
</reference>
<protein>
    <recommendedName>
        <fullName>Peroxisome proliferator-activated receptor gamma</fullName>
        <shortName>PPAR-gamma</shortName>
    </recommendedName>
    <alternativeName>
        <fullName>Nuclear receptor subfamily 1 group C member 3</fullName>
    </alternativeName>
</protein>
<proteinExistence type="evidence at transcript level"/>
<comment type="function">
    <text evidence="2 3">Nuclear receptor that binds peroxisome proliferators such as hypolipidemic drugs and fatty acids. Once activated by a ligand, the nuclear receptor binds to DNA specific PPAR response elements (PPRE) and modulates the transcription of its target genes, such as acyl-CoA oxidase. It therefore controls the peroxisomal beta-oxidation pathway of fatty acids. Key regulator of adipocyte differentiation and glucose homeostasis. ARF6 acts as a key regulator of the tissue-specific adipocyte P2 (aP2) enhancer. Acts as a critical regulator of gut homeostasis by suppressing NF-kappa-B-mediated pro-inflammatory responses. Plays a role in the regulation of cardiovascular circadian rhythms by regulating the transcription of BMAL1 in the blood vessels.</text>
</comment>
<comment type="activity regulation">
    <text evidence="1">PDPK1 activates its transcriptional activity independently of its kinase activity.</text>
</comment>
<comment type="subunit">
    <text evidence="2 3">Interacts with FOXO1 (acetylated form) (By similarity). Heterodimer with other nuclear receptors, such as RXRA. The heterodimer with the retinoic acid receptor RXRA is called adipocyte-specific transcription factor ARF6. Interacts with NCOA6 coactivator, leading to a strong increase in transcription of target genes. Interacts with coactivator PPARBP, leading to a mild increase in transcription of target genes. Interacts with NOCA7 in a ligand-inducible manner. Interacts with NCOA1 and NCOA2 LXXLL motifs. Interacts with ASXL1, ASXL2, DNTTIP2, FAM120B, MAP2K1/MEK1, NR0B2, PDPK1, PRDM16, PRMT2 and TGFB1I1. Interacts (when activated by agonist) with PPP5C. Interacts with HELZ2 and THRAP3; the interaction stimulates the transcriptional activity of PPARG. Interacts with PER2, the interaction is ligand dependent and blocks PPARG recruitment to target promoters. Interacts with NOCT. Interacts with ACTN4. Interacts (when in the liganded conformation) with GPS2 (By similarity). Interacts with CRY1 and CRY2 in a ligand-dependent manner (By similarity). In the absence of hormonal ligand, interacts with TACC1 (By similarity). In macrophages, interacts with PAQR3 and STUB1; the interactions promote PPARG poylubiquitination and STUB1-mediated degradation (By similarity).</text>
</comment>
<comment type="subcellular location">
    <subcellularLocation>
        <location evidence="4">Nucleus</location>
    </subcellularLocation>
    <subcellularLocation>
        <location evidence="1">Cytoplasm</location>
    </subcellularLocation>
    <text evidence="1">Redistributed from the nucleus to the cytosol through a MAP2K1/MEK1-dependent manner. NOCT enhances its nuclear translocation (By similarity).</text>
</comment>
<comment type="domain">
    <text evidence="2">The 9aaTAD motif is a transactivation domain present in a large number of yeast and animal transcription factors.</text>
</comment>
<comment type="PTM">
    <text evidence="2">Phosphorylated at basal conditions and dephosphorylated when treated with the ligand. May be dephosphorylated by PPP5C. The phosphorylated form may be inactive and dephosphorylation induces adipogenic activity (By similarity).</text>
</comment>
<comment type="PTM">
    <text evidence="2 3">Ubiquitinated by E3 ubiquitin-protein ligase complex containing FBXO9; leading to proteasomal degradation (By similarity). Ubiquitinated at Lys-252 by TRIM55 leading to proteasomal degradation (By similarity). Ubiquitinated by E3 ubiquitin-protein ligase STUB1/CHIP; leading to proteasomal degradation (By similarity).</text>
</comment>
<comment type="similarity">
    <text evidence="7">Belongs to the nuclear hormone receptor family. NR1 subfamily.</text>
</comment>
<feature type="chain" id="PRO_0000053490" description="Peroxisome proliferator-activated receptor gamma">
    <location>
        <begin position="1"/>
        <end position="505"/>
    </location>
</feature>
<feature type="domain" description="NR LBD" evidence="5">
    <location>
        <begin position="238"/>
        <end position="503"/>
    </location>
</feature>
<feature type="DNA-binding region" description="Nuclear receptor" evidence="4">
    <location>
        <begin position="136"/>
        <end position="210"/>
    </location>
</feature>
<feature type="zinc finger region" description="NR C4-type" evidence="4">
    <location>
        <begin position="139"/>
        <end position="159"/>
    </location>
</feature>
<feature type="zinc finger region" description="NR C4-type" evidence="4">
    <location>
        <begin position="176"/>
        <end position="198"/>
    </location>
</feature>
<feature type="region of interest" description="Disordered" evidence="6">
    <location>
        <begin position="1"/>
        <end position="26"/>
    </location>
</feature>
<feature type="region of interest" description="Interaction with FAM120B" evidence="1">
    <location>
        <begin position="205"/>
        <end position="280"/>
    </location>
</feature>
<feature type="short sequence motif" description="9aaTAD" evidence="2">
    <location>
        <begin position="495"/>
        <end position="503"/>
    </location>
</feature>
<feature type="compositionally biased region" description="Polar residues" evidence="6">
    <location>
        <begin position="17"/>
        <end position="26"/>
    </location>
</feature>
<feature type="modified residue" description="Phosphoserine; by MAPK" evidence="3">
    <location>
        <position position="112"/>
    </location>
</feature>
<feature type="cross-link" description="Glycyl lysine isopeptide (Lys-Gly) (interchain with G-Cter in ubiquitin)" evidence="2">
    <location>
        <position position="252"/>
    </location>
</feature>
<gene>
    <name type="primary">PPARG</name>
    <name type="synonym">NR1C3</name>
</gene>
<dbReference type="EMBL" id="DQ016141">
    <property type="protein sequence ID" value="AAY34942.1"/>
    <property type="molecule type" value="mRNA"/>
</dbReference>
<dbReference type="RefSeq" id="NP_001019803.1">
    <property type="nucleotide sequence ID" value="NM_001024632.2"/>
</dbReference>
<dbReference type="SMR" id="Q4U3Q4"/>
<dbReference type="FunCoup" id="Q4U3Q4">
    <property type="interactions" value="134"/>
</dbReference>
<dbReference type="STRING" id="9615.ENSCAFP00000007423"/>
<dbReference type="BindingDB" id="Q4U3Q4"/>
<dbReference type="ChEMBL" id="CHEMBL1932903"/>
<dbReference type="PaxDb" id="9612-ENSCAFP00000007423"/>
<dbReference type="GeneID" id="403606"/>
<dbReference type="KEGG" id="cfa:403606"/>
<dbReference type="CTD" id="5468"/>
<dbReference type="eggNOG" id="KOG3575">
    <property type="taxonomic scope" value="Eukaryota"/>
</dbReference>
<dbReference type="InParanoid" id="Q4U3Q4"/>
<dbReference type="OrthoDB" id="10249562at2759"/>
<dbReference type="PRO" id="PR:Q4U3Q4"/>
<dbReference type="Proteomes" id="UP000002254">
    <property type="component" value="Unplaced"/>
</dbReference>
<dbReference type="Proteomes" id="UP000694429">
    <property type="component" value="Unplaced"/>
</dbReference>
<dbReference type="Proteomes" id="UP000694542">
    <property type="component" value="Unplaced"/>
</dbReference>
<dbReference type="Proteomes" id="UP000805418">
    <property type="component" value="Unplaced"/>
</dbReference>
<dbReference type="GO" id="GO:0005737">
    <property type="term" value="C:cytoplasm"/>
    <property type="evidence" value="ECO:0007669"/>
    <property type="project" value="UniProtKB-SubCell"/>
</dbReference>
<dbReference type="GO" id="GO:0005634">
    <property type="term" value="C:nucleus"/>
    <property type="evidence" value="ECO:0000318"/>
    <property type="project" value="GO_Central"/>
</dbReference>
<dbReference type="GO" id="GO:0003682">
    <property type="term" value="F:chromatin binding"/>
    <property type="evidence" value="ECO:0000250"/>
    <property type="project" value="UniProtKB"/>
</dbReference>
<dbReference type="GO" id="GO:0003700">
    <property type="term" value="F:DNA-binding transcription factor activity"/>
    <property type="evidence" value="ECO:0000250"/>
    <property type="project" value="UniProtKB"/>
</dbReference>
<dbReference type="GO" id="GO:0001227">
    <property type="term" value="F:DNA-binding transcription repressor activity, RNA polymerase II-specific"/>
    <property type="evidence" value="ECO:0000318"/>
    <property type="project" value="GO_Central"/>
</dbReference>
<dbReference type="GO" id="GO:0070888">
    <property type="term" value="F:E-box binding"/>
    <property type="evidence" value="ECO:0000250"/>
    <property type="project" value="UniProtKB"/>
</dbReference>
<dbReference type="GO" id="GO:0004879">
    <property type="term" value="F:nuclear receptor activity"/>
    <property type="evidence" value="ECO:0000250"/>
    <property type="project" value="UniProtKB"/>
</dbReference>
<dbReference type="GO" id="GO:0000978">
    <property type="term" value="F:RNA polymerase II cis-regulatory region sequence-specific DNA binding"/>
    <property type="evidence" value="ECO:0000318"/>
    <property type="project" value="GO_Central"/>
</dbReference>
<dbReference type="GO" id="GO:0000976">
    <property type="term" value="F:transcription cis-regulatory region binding"/>
    <property type="evidence" value="ECO:0000250"/>
    <property type="project" value="UniProtKB"/>
</dbReference>
<dbReference type="GO" id="GO:0008270">
    <property type="term" value="F:zinc ion binding"/>
    <property type="evidence" value="ECO:0007669"/>
    <property type="project" value="UniProtKB-KW"/>
</dbReference>
<dbReference type="GO" id="GO:0030154">
    <property type="term" value="P:cell differentiation"/>
    <property type="evidence" value="ECO:0000318"/>
    <property type="project" value="GO_Central"/>
</dbReference>
<dbReference type="GO" id="GO:0032869">
    <property type="term" value="P:cellular response to insulin stimulus"/>
    <property type="evidence" value="ECO:0000250"/>
    <property type="project" value="UniProtKB"/>
</dbReference>
<dbReference type="GO" id="GO:0006631">
    <property type="term" value="P:fatty acid metabolic process"/>
    <property type="evidence" value="ECO:0000318"/>
    <property type="project" value="GO_Central"/>
</dbReference>
<dbReference type="GO" id="GO:0009755">
    <property type="term" value="P:hormone-mediated signaling pathway"/>
    <property type="evidence" value="ECO:0000318"/>
    <property type="project" value="GO_Central"/>
</dbReference>
<dbReference type="GO" id="GO:0030522">
    <property type="term" value="P:intracellular receptor signaling pathway"/>
    <property type="evidence" value="ECO:0000318"/>
    <property type="project" value="GO_Central"/>
</dbReference>
<dbReference type="GO" id="GO:0010887">
    <property type="term" value="P:negative regulation of cholesterol storage"/>
    <property type="evidence" value="ECO:0000318"/>
    <property type="project" value="GO_Central"/>
</dbReference>
<dbReference type="GO" id="GO:0050728">
    <property type="term" value="P:negative regulation of inflammatory response"/>
    <property type="evidence" value="ECO:0000318"/>
    <property type="project" value="GO_Central"/>
</dbReference>
<dbReference type="GO" id="GO:0000122">
    <property type="term" value="P:negative regulation of transcription by RNA polymerase II"/>
    <property type="evidence" value="ECO:0000318"/>
    <property type="project" value="GO_Central"/>
</dbReference>
<dbReference type="GO" id="GO:0035357">
    <property type="term" value="P:peroxisome proliferator activated receptor signaling pathway"/>
    <property type="evidence" value="ECO:0000250"/>
    <property type="project" value="UniProtKB"/>
</dbReference>
<dbReference type="GO" id="GO:0045893">
    <property type="term" value="P:positive regulation of DNA-templated transcription"/>
    <property type="evidence" value="ECO:0000250"/>
    <property type="project" value="UniProtKB"/>
</dbReference>
<dbReference type="GO" id="GO:0045923">
    <property type="term" value="P:positive regulation of fatty acid metabolic process"/>
    <property type="evidence" value="ECO:0000318"/>
    <property type="project" value="GO_Central"/>
</dbReference>
<dbReference type="GO" id="GO:0045944">
    <property type="term" value="P:positive regulation of transcription by RNA polymerase II"/>
    <property type="evidence" value="ECO:0000250"/>
    <property type="project" value="UniProtKB"/>
</dbReference>
<dbReference type="GO" id="GO:0042752">
    <property type="term" value="P:regulation of circadian rhythm"/>
    <property type="evidence" value="ECO:0000250"/>
    <property type="project" value="UniProtKB"/>
</dbReference>
<dbReference type="GO" id="GO:0006355">
    <property type="term" value="P:regulation of DNA-templated transcription"/>
    <property type="evidence" value="ECO:0000250"/>
    <property type="project" value="UniProtKB"/>
</dbReference>
<dbReference type="GO" id="GO:0006357">
    <property type="term" value="P:regulation of transcription by RNA polymerase II"/>
    <property type="evidence" value="ECO:0000250"/>
    <property type="project" value="UniProtKB"/>
</dbReference>
<dbReference type="GO" id="GO:0048384">
    <property type="term" value="P:retinoic acid receptor signaling pathway"/>
    <property type="evidence" value="ECO:0000250"/>
    <property type="project" value="UniProtKB"/>
</dbReference>
<dbReference type="GO" id="GO:0048511">
    <property type="term" value="P:rhythmic process"/>
    <property type="evidence" value="ECO:0007669"/>
    <property type="project" value="UniProtKB-KW"/>
</dbReference>
<dbReference type="CDD" id="cd06965">
    <property type="entry name" value="NR_DBD_Ppar"/>
    <property type="match status" value="1"/>
</dbReference>
<dbReference type="CDD" id="cd06932">
    <property type="entry name" value="NR_LBD_PPAR"/>
    <property type="match status" value="1"/>
</dbReference>
<dbReference type="FunFam" id="1.10.565.10:FF:000017">
    <property type="entry name" value="Peroxisome proliferator-activated receptor gamma"/>
    <property type="match status" value="1"/>
</dbReference>
<dbReference type="FunFam" id="3.30.50.10:FF:000010">
    <property type="entry name" value="Peroxisome proliferator-activated receptor gamma"/>
    <property type="match status" value="1"/>
</dbReference>
<dbReference type="Gene3D" id="3.30.50.10">
    <property type="entry name" value="Erythroid Transcription Factor GATA-1, subunit A"/>
    <property type="match status" value="1"/>
</dbReference>
<dbReference type="Gene3D" id="1.10.565.10">
    <property type="entry name" value="Retinoid X Receptor"/>
    <property type="match status" value="1"/>
</dbReference>
<dbReference type="InterPro" id="IPR003074">
    <property type="entry name" value="1Cnucl_rcpt"/>
</dbReference>
<dbReference type="InterPro" id="IPR035500">
    <property type="entry name" value="NHR-like_dom_sf"/>
</dbReference>
<dbReference type="InterPro" id="IPR000536">
    <property type="entry name" value="Nucl_hrmn_rcpt_lig-bd"/>
</dbReference>
<dbReference type="InterPro" id="IPR050234">
    <property type="entry name" value="Nuclear_hormone_rcpt_NR1"/>
</dbReference>
<dbReference type="InterPro" id="IPR001723">
    <property type="entry name" value="Nuclear_hrmn_rcpt"/>
</dbReference>
<dbReference type="InterPro" id="IPR003077">
    <property type="entry name" value="PPAR-gamma"/>
</dbReference>
<dbReference type="InterPro" id="IPR022590">
    <property type="entry name" value="PPARgamma_N"/>
</dbReference>
<dbReference type="InterPro" id="IPR001628">
    <property type="entry name" value="Znf_hrmn_rcpt"/>
</dbReference>
<dbReference type="InterPro" id="IPR013088">
    <property type="entry name" value="Znf_NHR/GATA"/>
</dbReference>
<dbReference type="PANTHER" id="PTHR24082">
    <property type="entry name" value="NUCLEAR HORMONE RECEPTOR"/>
    <property type="match status" value="1"/>
</dbReference>
<dbReference type="PANTHER" id="PTHR24082:SF488">
    <property type="entry name" value="PEROXISOME PROLIFERATOR-ACTIVATED RECEPTOR GAMMA"/>
    <property type="match status" value="1"/>
</dbReference>
<dbReference type="Pfam" id="PF00104">
    <property type="entry name" value="Hormone_recep"/>
    <property type="match status" value="1"/>
</dbReference>
<dbReference type="Pfam" id="PF12577">
    <property type="entry name" value="PPARgamma_N"/>
    <property type="match status" value="1"/>
</dbReference>
<dbReference type="Pfam" id="PF00105">
    <property type="entry name" value="zf-C4"/>
    <property type="match status" value="1"/>
</dbReference>
<dbReference type="PRINTS" id="PR01288">
    <property type="entry name" value="PROXISOMEPAR"/>
</dbReference>
<dbReference type="PRINTS" id="PR01291">
    <property type="entry name" value="PROXISOMPAGR"/>
</dbReference>
<dbReference type="PRINTS" id="PR00398">
    <property type="entry name" value="STRDHORMONER"/>
</dbReference>
<dbReference type="PRINTS" id="PR00047">
    <property type="entry name" value="STROIDFINGER"/>
</dbReference>
<dbReference type="SMART" id="SM00430">
    <property type="entry name" value="HOLI"/>
    <property type="match status" value="1"/>
</dbReference>
<dbReference type="SMART" id="SM00399">
    <property type="entry name" value="ZnF_C4"/>
    <property type="match status" value="1"/>
</dbReference>
<dbReference type="SUPFAM" id="SSF57716">
    <property type="entry name" value="Glucocorticoid receptor-like (DNA-binding domain)"/>
    <property type="match status" value="1"/>
</dbReference>
<dbReference type="SUPFAM" id="SSF48508">
    <property type="entry name" value="Nuclear receptor ligand-binding domain"/>
    <property type="match status" value="1"/>
</dbReference>
<dbReference type="PROSITE" id="PS51843">
    <property type="entry name" value="NR_LBD"/>
    <property type="match status" value="1"/>
</dbReference>
<dbReference type="PROSITE" id="PS00031">
    <property type="entry name" value="NUCLEAR_REC_DBD_1"/>
    <property type="match status" value="1"/>
</dbReference>
<dbReference type="PROSITE" id="PS51030">
    <property type="entry name" value="NUCLEAR_REC_DBD_2"/>
    <property type="match status" value="1"/>
</dbReference>
<organism>
    <name type="scientific">Canis lupus familiaris</name>
    <name type="common">Dog</name>
    <name type="synonym">Canis familiaris</name>
    <dbReference type="NCBI Taxonomy" id="9615"/>
    <lineage>
        <taxon>Eukaryota</taxon>
        <taxon>Metazoa</taxon>
        <taxon>Chordata</taxon>
        <taxon>Craniata</taxon>
        <taxon>Vertebrata</taxon>
        <taxon>Euteleostomi</taxon>
        <taxon>Mammalia</taxon>
        <taxon>Eutheria</taxon>
        <taxon>Laurasiatheria</taxon>
        <taxon>Carnivora</taxon>
        <taxon>Caniformia</taxon>
        <taxon>Canidae</taxon>
        <taxon>Canis</taxon>
    </lineage>
</organism>
<sequence length="505" mass="57511">MGETLGDSLIDPESDSFADTLSASTSQETTMVDTEMPFWPTNFGISSVDLSVMDDHSHSFDIKPFTTVDFSSISTPHYEDIPFSRADPMVADYKYDLKLQEYQSAIKVEPASPPYYSEKTQLYNKPHEEPSNSLMAIECRVCGDKASGFHYGVHACEGCKGFFRRTIRLKLIYDRCDLNCRIHKKSRNKCQYCRFQKCLAVGMSHNAIRFGRMPQAEKEKLLAEISSDIDQLNPESADLRALAKHLYDSYIKSFPLTKAKARAILTGKTTDKSPFVIYDMNSLMMGEDKIKFKHITPLQEQSKEVAIRIFQGCQFRSVEAVQEITEYAKSIPGFVNLDLNDQVTLLKYGVHEIIYTMLASLMNKDGVLISEGQGFMTREFLKSLRKPFGDFMEPKFEFAVKFNALELDDSDLAIFIAVIILSGDRPGLLNVKPIEDIQDNLLQALELQLKLNHPESSQLFAKLLQKMTDLRQIVTEHVQLLQVIKKTETDMSLHPLLQEIYKDLY</sequence>